<name>ENO_PHOPR</name>
<sequence length="433" mass="45615">MSKIVKVLGREIIDSRGNPTVEAEVHLEGGFVGMAAAPSGASTGSREALELRDGDKSRFLGKGVLKALEAVNGPIAEALLGKDATDQAAIDQVMIDLDGTENKSKFGANAILAVSLANAKAGAAAKGMPLYEHIAELNGTAGQFSMPLPMMNIINGGEHADNNVDIQEFMIQPVGAKTFREAVRIGAEVFHNLAKVLKAKGLSTAVGDEGGFAPNLESNAAALAAIKEAVEAAGYELGKDVTLAMDCAASEFYDKEAGNYNMKGEGKIFTSEEFNFYLQDLANQYPIVSIEDGLDESDWAGFKHQTELLGDKLQIVGDDLFVTNTKILAEGIEKGVANSILIKFNQIGSLTETLAAIKMAKDAGYTAVISHRSGETEDATIADLAVGTAAGQIKTGSMSRSDRVAKYNQLLRIEEALGAKAPFNGLKEVKGQA</sequence>
<organism>
    <name type="scientific">Photobacterium profundum (strain SS9)</name>
    <dbReference type="NCBI Taxonomy" id="298386"/>
    <lineage>
        <taxon>Bacteria</taxon>
        <taxon>Pseudomonadati</taxon>
        <taxon>Pseudomonadota</taxon>
        <taxon>Gammaproteobacteria</taxon>
        <taxon>Vibrionales</taxon>
        <taxon>Vibrionaceae</taxon>
        <taxon>Photobacterium</taxon>
    </lineage>
</organism>
<dbReference type="EC" id="4.2.1.11" evidence="1"/>
<dbReference type="EMBL" id="CR378673">
    <property type="protein sequence ID" value="CAG21395.1"/>
    <property type="molecule type" value="Genomic_DNA"/>
</dbReference>
<dbReference type="RefSeq" id="WP_011219654.1">
    <property type="nucleotide sequence ID" value="NC_006370.1"/>
</dbReference>
<dbReference type="SMR" id="Q6LMT1"/>
<dbReference type="STRING" id="298386.PBPRA3079"/>
<dbReference type="KEGG" id="ppr:PBPRA3079"/>
<dbReference type="eggNOG" id="COG0148">
    <property type="taxonomic scope" value="Bacteria"/>
</dbReference>
<dbReference type="HOGENOM" id="CLU_031223_2_1_6"/>
<dbReference type="UniPathway" id="UPA00109">
    <property type="reaction ID" value="UER00187"/>
</dbReference>
<dbReference type="Proteomes" id="UP000000593">
    <property type="component" value="Chromosome 1"/>
</dbReference>
<dbReference type="GO" id="GO:0009986">
    <property type="term" value="C:cell surface"/>
    <property type="evidence" value="ECO:0007669"/>
    <property type="project" value="UniProtKB-SubCell"/>
</dbReference>
<dbReference type="GO" id="GO:0005576">
    <property type="term" value="C:extracellular region"/>
    <property type="evidence" value="ECO:0007669"/>
    <property type="project" value="UniProtKB-SubCell"/>
</dbReference>
<dbReference type="GO" id="GO:0000015">
    <property type="term" value="C:phosphopyruvate hydratase complex"/>
    <property type="evidence" value="ECO:0007669"/>
    <property type="project" value="InterPro"/>
</dbReference>
<dbReference type="GO" id="GO:0000287">
    <property type="term" value="F:magnesium ion binding"/>
    <property type="evidence" value="ECO:0007669"/>
    <property type="project" value="UniProtKB-UniRule"/>
</dbReference>
<dbReference type="GO" id="GO:0004634">
    <property type="term" value="F:phosphopyruvate hydratase activity"/>
    <property type="evidence" value="ECO:0007669"/>
    <property type="project" value="UniProtKB-UniRule"/>
</dbReference>
<dbReference type="GO" id="GO:0006096">
    <property type="term" value="P:glycolytic process"/>
    <property type="evidence" value="ECO:0007669"/>
    <property type="project" value="UniProtKB-UniRule"/>
</dbReference>
<dbReference type="CDD" id="cd03313">
    <property type="entry name" value="enolase"/>
    <property type="match status" value="1"/>
</dbReference>
<dbReference type="FunFam" id="3.20.20.120:FF:000001">
    <property type="entry name" value="Enolase"/>
    <property type="match status" value="1"/>
</dbReference>
<dbReference type="FunFam" id="3.30.390.10:FF:000001">
    <property type="entry name" value="Enolase"/>
    <property type="match status" value="1"/>
</dbReference>
<dbReference type="Gene3D" id="3.20.20.120">
    <property type="entry name" value="Enolase-like C-terminal domain"/>
    <property type="match status" value="1"/>
</dbReference>
<dbReference type="Gene3D" id="3.30.390.10">
    <property type="entry name" value="Enolase-like, N-terminal domain"/>
    <property type="match status" value="1"/>
</dbReference>
<dbReference type="HAMAP" id="MF_00318">
    <property type="entry name" value="Enolase"/>
    <property type="match status" value="1"/>
</dbReference>
<dbReference type="InterPro" id="IPR000941">
    <property type="entry name" value="Enolase"/>
</dbReference>
<dbReference type="InterPro" id="IPR036849">
    <property type="entry name" value="Enolase-like_C_sf"/>
</dbReference>
<dbReference type="InterPro" id="IPR029017">
    <property type="entry name" value="Enolase-like_N"/>
</dbReference>
<dbReference type="InterPro" id="IPR020810">
    <property type="entry name" value="Enolase_C"/>
</dbReference>
<dbReference type="InterPro" id="IPR020809">
    <property type="entry name" value="Enolase_CS"/>
</dbReference>
<dbReference type="InterPro" id="IPR020811">
    <property type="entry name" value="Enolase_N"/>
</dbReference>
<dbReference type="NCBIfam" id="TIGR01060">
    <property type="entry name" value="eno"/>
    <property type="match status" value="1"/>
</dbReference>
<dbReference type="PANTHER" id="PTHR11902">
    <property type="entry name" value="ENOLASE"/>
    <property type="match status" value="1"/>
</dbReference>
<dbReference type="PANTHER" id="PTHR11902:SF1">
    <property type="entry name" value="ENOLASE"/>
    <property type="match status" value="1"/>
</dbReference>
<dbReference type="Pfam" id="PF00113">
    <property type="entry name" value="Enolase_C"/>
    <property type="match status" value="1"/>
</dbReference>
<dbReference type="Pfam" id="PF03952">
    <property type="entry name" value="Enolase_N"/>
    <property type="match status" value="1"/>
</dbReference>
<dbReference type="PIRSF" id="PIRSF001400">
    <property type="entry name" value="Enolase"/>
    <property type="match status" value="1"/>
</dbReference>
<dbReference type="PRINTS" id="PR00148">
    <property type="entry name" value="ENOLASE"/>
</dbReference>
<dbReference type="SFLD" id="SFLDF00002">
    <property type="entry name" value="enolase"/>
    <property type="match status" value="1"/>
</dbReference>
<dbReference type="SFLD" id="SFLDG00178">
    <property type="entry name" value="enolase"/>
    <property type="match status" value="1"/>
</dbReference>
<dbReference type="SMART" id="SM01192">
    <property type="entry name" value="Enolase_C"/>
    <property type="match status" value="1"/>
</dbReference>
<dbReference type="SMART" id="SM01193">
    <property type="entry name" value="Enolase_N"/>
    <property type="match status" value="1"/>
</dbReference>
<dbReference type="SUPFAM" id="SSF51604">
    <property type="entry name" value="Enolase C-terminal domain-like"/>
    <property type="match status" value="1"/>
</dbReference>
<dbReference type="SUPFAM" id="SSF54826">
    <property type="entry name" value="Enolase N-terminal domain-like"/>
    <property type="match status" value="1"/>
</dbReference>
<dbReference type="PROSITE" id="PS00164">
    <property type="entry name" value="ENOLASE"/>
    <property type="match status" value="1"/>
</dbReference>
<feature type="chain" id="PRO_0000133943" description="Enolase">
    <location>
        <begin position="1"/>
        <end position="433"/>
    </location>
</feature>
<feature type="active site" description="Proton donor" evidence="1">
    <location>
        <position position="209"/>
    </location>
</feature>
<feature type="active site" description="Proton acceptor" evidence="1">
    <location>
        <position position="343"/>
    </location>
</feature>
<feature type="binding site" evidence="1">
    <location>
        <position position="167"/>
    </location>
    <ligand>
        <name>(2R)-2-phosphoglycerate</name>
        <dbReference type="ChEBI" id="CHEBI:58289"/>
    </ligand>
</feature>
<feature type="binding site" evidence="1">
    <location>
        <position position="246"/>
    </location>
    <ligand>
        <name>Mg(2+)</name>
        <dbReference type="ChEBI" id="CHEBI:18420"/>
    </ligand>
</feature>
<feature type="binding site" evidence="1">
    <location>
        <position position="291"/>
    </location>
    <ligand>
        <name>Mg(2+)</name>
        <dbReference type="ChEBI" id="CHEBI:18420"/>
    </ligand>
</feature>
<feature type="binding site" evidence="1">
    <location>
        <position position="318"/>
    </location>
    <ligand>
        <name>Mg(2+)</name>
        <dbReference type="ChEBI" id="CHEBI:18420"/>
    </ligand>
</feature>
<feature type="binding site" evidence="1">
    <location>
        <position position="343"/>
    </location>
    <ligand>
        <name>(2R)-2-phosphoglycerate</name>
        <dbReference type="ChEBI" id="CHEBI:58289"/>
    </ligand>
</feature>
<feature type="binding site" evidence="1">
    <location>
        <position position="372"/>
    </location>
    <ligand>
        <name>(2R)-2-phosphoglycerate</name>
        <dbReference type="ChEBI" id="CHEBI:58289"/>
    </ligand>
</feature>
<feature type="binding site" evidence="1">
    <location>
        <position position="373"/>
    </location>
    <ligand>
        <name>(2R)-2-phosphoglycerate</name>
        <dbReference type="ChEBI" id="CHEBI:58289"/>
    </ligand>
</feature>
<feature type="binding site" evidence="1">
    <location>
        <position position="394"/>
    </location>
    <ligand>
        <name>(2R)-2-phosphoglycerate</name>
        <dbReference type="ChEBI" id="CHEBI:58289"/>
    </ligand>
</feature>
<accession>Q6LMT1</accession>
<protein>
    <recommendedName>
        <fullName evidence="1">Enolase</fullName>
        <ecNumber evidence="1">4.2.1.11</ecNumber>
    </recommendedName>
    <alternativeName>
        <fullName evidence="1">2-phospho-D-glycerate hydro-lyase</fullName>
    </alternativeName>
    <alternativeName>
        <fullName evidence="1">2-phosphoglycerate dehydratase</fullName>
    </alternativeName>
</protein>
<evidence type="ECO:0000255" key="1">
    <source>
        <dbReference type="HAMAP-Rule" id="MF_00318"/>
    </source>
</evidence>
<keyword id="KW-0963">Cytoplasm</keyword>
<keyword id="KW-0324">Glycolysis</keyword>
<keyword id="KW-0456">Lyase</keyword>
<keyword id="KW-0460">Magnesium</keyword>
<keyword id="KW-0479">Metal-binding</keyword>
<keyword id="KW-1185">Reference proteome</keyword>
<keyword id="KW-0964">Secreted</keyword>
<reference key="1">
    <citation type="journal article" date="2005" name="Science">
        <title>Life at depth: Photobacterium profundum genome sequence and expression analysis.</title>
        <authorList>
            <person name="Vezzi A."/>
            <person name="Campanaro S."/>
            <person name="D'Angelo M."/>
            <person name="Simonato F."/>
            <person name="Vitulo N."/>
            <person name="Lauro F.M."/>
            <person name="Cestaro A."/>
            <person name="Malacrida G."/>
            <person name="Simionati B."/>
            <person name="Cannata N."/>
            <person name="Romualdi C."/>
            <person name="Bartlett D.H."/>
            <person name="Valle G."/>
        </authorList>
    </citation>
    <scope>NUCLEOTIDE SEQUENCE [LARGE SCALE GENOMIC DNA]</scope>
    <source>
        <strain>ATCC BAA-1253 / SS9</strain>
    </source>
</reference>
<proteinExistence type="inferred from homology"/>
<gene>
    <name evidence="1" type="primary">eno</name>
    <name type="ordered locus">PBPRA3079</name>
</gene>
<comment type="function">
    <text evidence="1">Catalyzes the reversible conversion of 2-phosphoglycerate (2-PG) into phosphoenolpyruvate (PEP). It is essential for the degradation of carbohydrates via glycolysis.</text>
</comment>
<comment type="catalytic activity">
    <reaction evidence="1">
        <text>(2R)-2-phosphoglycerate = phosphoenolpyruvate + H2O</text>
        <dbReference type="Rhea" id="RHEA:10164"/>
        <dbReference type="ChEBI" id="CHEBI:15377"/>
        <dbReference type="ChEBI" id="CHEBI:58289"/>
        <dbReference type="ChEBI" id="CHEBI:58702"/>
        <dbReference type="EC" id="4.2.1.11"/>
    </reaction>
</comment>
<comment type="cofactor">
    <cofactor evidence="1">
        <name>Mg(2+)</name>
        <dbReference type="ChEBI" id="CHEBI:18420"/>
    </cofactor>
    <text evidence="1">Binds a second Mg(2+) ion via substrate during catalysis.</text>
</comment>
<comment type="pathway">
    <text evidence="1">Carbohydrate degradation; glycolysis; pyruvate from D-glyceraldehyde 3-phosphate: step 4/5.</text>
</comment>
<comment type="subunit">
    <text evidence="1">Component of the RNA degradosome, a multiprotein complex involved in RNA processing and mRNA degradation.</text>
</comment>
<comment type="subcellular location">
    <subcellularLocation>
        <location evidence="1">Cytoplasm</location>
    </subcellularLocation>
    <subcellularLocation>
        <location evidence="1">Secreted</location>
    </subcellularLocation>
    <subcellularLocation>
        <location evidence="1">Cell surface</location>
    </subcellularLocation>
    <text evidence="1">Fractions of enolase are present in both the cytoplasm and on the cell surface.</text>
</comment>
<comment type="similarity">
    <text evidence="1">Belongs to the enolase family.</text>
</comment>